<protein>
    <recommendedName>
        <fullName evidence="1">3-dehydroquinate dehydratase</fullName>
        <shortName evidence="1">3-dehydroquinase</shortName>
        <ecNumber evidence="1">4.2.1.10</ecNumber>
    </recommendedName>
    <alternativeName>
        <fullName evidence="1">Type I DHQase</fullName>
    </alternativeName>
    <alternativeName>
        <fullName evidence="1">Type I dehydroquinase</fullName>
        <shortName evidence="1">DHQ1</shortName>
    </alternativeName>
</protein>
<accession>B5YPY0</accession>
<feature type="chain" id="PRO_1000099904" description="3-dehydroquinate dehydratase">
    <location>
        <begin position="1"/>
        <end position="252"/>
    </location>
</feature>
<feature type="active site" description="Proton donor/acceptor" evidence="1">
    <location>
        <position position="143"/>
    </location>
</feature>
<feature type="active site" description="Schiff-base intermediate with substrate" evidence="1">
    <location>
        <position position="170"/>
    </location>
</feature>
<feature type="binding site" evidence="1">
    <location>
        <position position="21"/>
    </location>
    <ligand>
        <name>3-dehydroquinate</name>
        <dbReference type="ChEBI" id="CHEBI:32364"/>
    </ligand>
</feature>
<feature type="binding site" evidence="1">
    <location>
        <begin position="46"/>
        <end position="48"/>
    </location>
    <ligand>
        <name>3-dehydroquinate</name>
        <dbReference type="ChEBI" id="CHEBI:32364"/>
    </ligand>
</feature>
<feature type="binding site" evidence="1">
    <location>
        <position position="82"/>
    </location>
    <ligand>
        <name>3-dehydroquinate</name>
        <dbReference type="ChEBI" id="CHEBI:32364"/>
    </ligand>
</feature>
<feature type="binding site" evidence="1">
    <location>
        <position position="213"/>
    </location>
    <ligand>
        <name>3-dehydroquinate</name>
        <dbReference type="ChEBI" id="CHEBI:32364"/>
    </ligand>
</feature>
<feature type="binding site" evidence="1">
    <location>
        <position position="232"/>
    </location>
    <ligand>
        <name>3-dehydroquinate</name>
        <dbReference type="ChEBI" id="CHEBI:32364"/>
    </ligand>
</feature>
<feature type="binding site" evidence="1">
    <location>
        <position position="236"/>
    </location>
    <ligand>
        <name>3-dehydroquinate</name>
        <dbReference type="ChEBI" id="CHEBI:32364"/>
    </ligand>
</feature>
<gene>
    <name evidence="1" type="primary">aroD</name>
    <name type="ordered locus">ECH74115_2409</name>
</gene>
<name>AROD_ECO5E</name>
<keyword id="KW-0028">Amino-acid biosynthesis</keyword>
<keyword id="KW-0057">Aromatic amino acid biosynthesis</keyword>
<keyword id="KW-0456">Lyase</keyword>
<keyword id="KW-0704">Schiff base</keyword>
<sequence>MKTVTVKDLVIGTGAPKIIVSLMAKDIARVKSEALAYREADFDILEWRVDHFADLSNVESVMAAAKILRETMPEKPLLFTFRSAKEGGEQAISTEAYIALNRAAIDSGLVDMIDLELFTGDDQVKETVAYAHAHDVKVVMSNHDFHKTPEAEEIIARLRKMQSFDADIPKIALMPQSTSDVLALLAATLEMQEQYADRPIITMSMAKTGVISRLAGEVFGSAATFGAVKKASAPGQISVNDLRTVLTILHQA</sequence>
<evidence type="ECO:0000255" key="1">
    <source>
        <dbReference type="HAMAP-Rule" id="MF_00214"/>
    </source>
</evidence>
<dbReference type="EC" id="4.2.1.10" evidence="1"/>
<dbReference type="EMBL" id="CP001164">
    <property type="protein sequence ID" value="ACI38540.1"/>
    <property type="molecule type" value="Genomic_DNA"/>
</dbReference>
<dbReference type="RefSeq" id="WP_000860179.1">
    <property type="nucleotide sequence ID" value="NC_011353.1"/>
</dbReference>
<dbReference type="SMR" id="B5YPY0"/>
<dbReference type="KEGG" id="ecf:ECH74115_2409"/>
<dbReference type="HOGENOM" id="CLU_064444_0_0_6"/>
<dbReference type="UniPathway" id="UPA00053">
    <property type="reaction ID" value="UER00086"/>
</dbReference>
<dbReference type="GO" id="GO:0003855">
    <property type="term" value="F:3-dehydroquinate dehydratase activity"/>
    <property type="evidence" value="ECO:0007669"/>
    <property type="project" value="UniProtKB-UniRule"/>
</dbReference>
<dbReference type="GO" id="GO:0046279">
    <property type="term" value="P:3,4-dihydroxybenzoate biosynthetic process"/>
    <property type="evidence" value="ECO:0007669"/>
    <property type="project" value="UniProtKB-ARBA"/>
</dbReference>
<dbReference type="GO" id="GO:0008652">
    <property type="term" value="P:amino acid biosynthetic process"/>
    <property type="evidence" value="ECO:0007669"/>
    <property type="project" value="UniProtKB-KW"/>
</dbReference>
<dbReference type="GO" id="GO:0009073">
    <property type="term" value="P:aromatic amino acid family biosynthetic process"/>
    <property type="evidence" value="ECO:0007669"/>
    <property type="project" value="UniProtKB-KW"/>
</dbReference>
<dbReference type="GO" id="GO:0009423">
    <property type="term" value="P:chorismate biosynthetic process"/>
    <property type="evidence" value="ECO:0007669"/>
    <property type="project" value="UniProtKB-UniRule"/>
</dbReference>
<dbReference type="CDD" id="cd00502">
    <property type="entry name" value="DHQase_I"/>
    <property type="match status" value="1"/>
</dbReference>
<dbReference type="FunFam" id="3.20.20.70:FF:000047">
    <property type="entry name" value="3-dehydroquinate dehydratase"/>
    <property type="match status" value="1"/>
</dbReference>
<dbReference type="Gene3D" id="3.20.20.70">
    <property type="entry name" value="Aldolase class I"/>
    <property type="match status" value="1"/>
</dbReference>
<dbReference type="HAMAP" id="MF_00214">
    <property type="entry name" value="AroD"/>
    <property type="match status" value="1"/>
</dbReference>
<dbReference type="InterPro" id="IPR018508">
    <property type="entry name" value="3-dehydroquinate_DH_AS"/>
</dbReference>
<dbReference type="InterPro" id="IPR013785">
    <property type="entry name" value="Aldolase_TIM"/>
</dbReference>
<dbReference type="InterPro" id="IPR001381">
    <property type="entry name" value="DHquinase_I"/>
</dbReference>
<dbReference type="InterPro" id="IPR050146">
    <property type="entry name" value="Type-I_3-dehydroquinase"/>
</dbReference>
<dbReference type="NCBIfam" id="TIGR01093">
    <property type="entry name" value="aroD"/>
    <property type="match status" value="1"/>
</dbReference>
<dbReference type="PANTHER" id="PTHR43699">
    <property type="entry name" value="3-DEHYDROQUINATE DEHYDRATASE"/>
    <property type="match status" value="1"/>
</dbReference>
<dbReference type="PANTHER" id="PTHR43699:SF1">
    <property type="entry name" value="3-DEHYDROQUINATE DEHYDRATASE"/>
    <property type="match status" value="1"/>
</dbReference>
<dbReference type="Pfam" id="PF01487">
    <property type="entry name" value="DHquinase_I"/>
    <property type="match status" value="1"/>
</dbReference>
<dbReference type="SUPFAM" id="SSF51569">
    <property type="entry name" value="Aldolase"/>
    <property type="match status" value="1"/>
</dbReference>
<dbReference type="PROSITE" id="PS01028">
    <property type="entry name" value="DEHYDROQUINASE_I"/>
    <property type="match status" value="1"/>
</dbReference>
<organism>
    <name type="scientific">Escherichia coli O157:H7 (strain EC4115 / EHEC)</name>
    <dbReference type="NCBI Taxonomy" id="444450"/>
    <lineage>
        <taxon>Bacteria</taxon>
        <taxon>Pseudomonadati</taxon>
        <taxon>Pseudomonadota</taxon>
        <taxon>Gammaproteobacteria</taxon>
        <taxon>Enterobacterales</taxon>
        <taxon>Enterobacteriaceae</taxon>
        <taxon>Escherichia</taxon>
    </lineage>
</organism>
<reference key="1">
    <citation type="journal article" date="2011" name="Proc. Natl. Acad. Sci. U.S.A.">
        <title>Genomic anatomy of Escherichia coli O157:H7 outbreaks.</title>
        <authorList>
            <person name="Eppinger M."/>
            <person name="Mammel M.K."/>
            <person name="Leclerc J.E."/>
            <person name="Ravel J."/>
            <person name="Cebula T.A."/>
        </authorList>
    </citation>
    <scope>NUCLEOTIDE SEQUENCE [LARGE SCALE GENOMIC DNA]</scope>
    <source>
        <strain>EC4115 / EHEC</strain>
    </source>
</reference>
<proteinExistence type="inferred from homology"/>
<comment type="function">
    <text evidence="1">Involved in the third step of the chorismate pathway, which leads to the biosynthesis of aromatic amino acids. Catalyzes the cis-dehydration of 3-dehydroquinate (DHQ) and introduces the first double bond of the aromatic ring to yield 3-dehydroshikimate.</text>
</comment>
<comment type="catalytic activity">
    <reaction evidence="1">
        <text>3-dehydroquinate = 3-dehydroshikimate + H2O</text>
        <dbReference type="Rhea" id="RHEA:21096"/>
        <dbReference type="ChEBI" id="CHEBI:15377"/>
        <dbReference type="ChEBI" id="CHEBI:16630"/>
        <dbReference type="ChEBI" id="CHEBI:32364"/>
        <dbReference type="EC" id="4.2.1.10"/>
    </reaction>
</comment>
<comment type="pathway">
    <text evidence="1">Metabolic intermediate biosynthesis; chorismate biosynthesis; chorismate from D-erythrose 4-phosphate and phosphoenolpyruvate: step 3/7.</text>
</comment>
<comment type="subunit">
    <text evidence="1">Homodimer.</text>
</comment>
<comment type="similarity">
    <text evidence="1">Belongs to the type-I 3-dehydroquinase family.</text>
</comment>